<reference key="1">
    <citation type="journal article" date="1995" name="Plant Mol. Biol.">
        <title>Physical map and gene organization of the mitochondrial genome from the unicellular green alga Platymonas (Tetraselmis) subcordiformis (Prasinophyceae).</title>
        <authorList>
            <person name="Kessler U."/>
            <person name="Zetsche K."/>
        </authorList>
    </citation>
    <scope>NUCLEOTIDE SEQUENCE [GENOMIC DNA]</scope>
</reference>
<comment type="function">
    <text evidence="1">Core subunit of the mitochondrial membrane respiratory chain NADH dehydrogenase (Complex I) that is believed to belong to the minimal assembly required for catalysis. Complex I functions in the transfer of electrons from NADH to the respiratory chain. The immediate electron acceptor for the enzyme is believed to be ubiquinone (By similarity).</text>
</comment>
<comment type="catalytic activity">
    <reaction>
        <text>a ubiquinone + NADH + 5 H(+)(in) = a ubiquinol + NAD(+) + 4 H(+)(out)</text>
        <dbReference type="Rhea" id="RHEA:29091"/>
        <dbReference type="Rhea" id="RHEA-COMP:9565"/>
        <dbReference type="Rhea" id="RHEA-COMP:9566"/>
        <dbReference type="ChEBI" id="CHEBI:15378"/>
        <dbReference type="ChEBI" id="CHEBI:16389"/>
        <dbReference type="ChEBI" id="CHEBI:17976"/>
        <dbReference type="ChEBI" id="CHEBI:57540"/>
        <dbReference type="ChEBI" id="CHEBI:57945"/>
        <dbReference type="EC" id="7.1.1.2"/>
    </reaction>
</comment>
<comment type="subcellular location">
    <subcellularLocation>
        <location evidence="1">Mitochondrion membrane</location>
        <topology evidence="1">Multi-pass membrane protein</topology>
    </subcellularLocation>
</comment>
<comment type="similarity">
    <text evidence="3">Belongs to the complex I subunit 3 family.</text>
</comment>
<dbReference type="EC" id="7.1.1.2"/>
<dbReference type="EMBL" id="Z47795">
    <property type="protein sequence ID" value="CAA87750.1"/>
    <property type="molecule type" value="Genomic_DNA"/>
</dbReference>
<dbReference type="PIR" id="S62703">
    <property type="entry name" value="S62703"/>
</dbReference>
<dbReference type="SMR" id="Q36518"/>
<dbReference type="GO" id="GO:0031966">
    <property type="term" value="C:mitochondrial membrane"/>
    <property type="evidence" value="ECO:0007669"/>
    <property type="project" value="UniProtKB-SubCell"/>
</dbReference>
<dbReference type="GO" id="GO:0030964">
    <property type="term" value="C:NADH dehydrogenase complex"/>
    <property type="evidence" value="ECO:0007669"/>
    <property type="project" value="TreeGrafter"/>
</dbReference>
<dbReference type="GO" id="GO:0008137">
    <property type="term" value="F:NADH dehydrogenase (ubiquinone) activity"/>
    <property type="evidence" value="ECO:0007669"/>
    <property type="project" value="UniProtKB-EC"/>
</dbReference>
<dbReference type="FunFam" id="1.20.58.1610:FF:000004">
    <property type="entry name" value="NADH-quinone oxidoreductase subunit A"/>
    <property type="match status" value="1"/>
</dbReference>
<dbReference type="Gene3D" id="1.20.58.1610">
    <property type="entry name" value="NADH:ubiquinone/plastoquinone oxidoreductase, chain 3"/>
    <property type="match status" value="1"/>
</dbReference>
<dbReference type="HAMAP" id="MF_01394">
    <property type="entry name" value="NDH1_NuoA"/>
    <property type="match status" value="1"/>
</dbReference>
<dbReference type="InterPro" id="IPR023043">
    <property type="entry name" value="NAD(P)H_OxRDtase_bac/plastid"/>
</dbReference>
<dbReference type="InterPro" id="IPR000440">
    <property type="entry name" value="NADH_UbQ/plastoQ_OxRdtase_su3"/>
</dbReference>
<dbReference type="InterPro" id="IPR038430">
    <property type="entry name" value="NDAH_ubi_oxred_su3_sf"/>
</dbReference>
<dbReference type="PANTHER" id="PTHR11058">
    <property type="entry name" value="NADH-UBIQUINONE OXIDOREDUCTASE CHAIN 3"/>
    <property type="match status" value="1"/>
</dbReference>
<dbReference type="PANTHER" id="PTHR11058:SF9">
    <property type="entry name" value="NADH-UBIQUINONE OXIDOREDUCTASE CHAIN 3"/>
    <property type="match status" value="1"/>
</dbReference>
<dbReference type="Pfam" id="PF00507">
    <property type="entry name" value="Oxidored_q4"/>
    <property type="match status" value="1"/>
</dbReference>
<keyword id="KW-0249">Electron transport</keyword>
<keyword id="KW-0472">Membrane</keyword>
<keyword id="KW-0496">Mitochondrion</keyword>
<keyword id="KW-0520">NAD</keyword>
<keyword id="KW-0679">Respiratory chain</keyword>
<keyword id="KW-1278">Translocase</keyword>
<keyword id="KW-0812">Transmembrane</keyword>
<keyword id="KW-1133">Transmembrane helix</keyword>
<keyword id="KW-0813">Transport</keyword>
<keyword id="KW-0830">Ubiquinone</keyword>
<accession>Q36518</accession>
<geneLocation type="mitochondrion"/>
<sequence>MIEYLAVLIYFLFSLALASLIIFLSFIFAPQKPDPEKISAYECGFDPFDDARGKFDIRFYLVAILFIIFDLEVTFLFPWAVTLGKIGFFGFWTMMAFLIILTIGFIYEWKKGALEWE</sequence>
<name>NU3M_TETSU</name>
<gene>
    <name type="primary">ND3</name>
    <name type="synonym">NAD3</name>
</gene>
<proteinExistence type="inferred from homology"/>
<protein>
    <recommendedName>
        <fullName>NADH-ubiquinone oxidoreductase chain 3</fullName>
        <ecNumber>7.1.1.2</ecNumber>
    </recommendedName>
    <alternativeName>
        <fullName>NADH dehydrogenase subunit 3</fullName>
    </alternativeName>
</protein>
<organism>
    <name type="scientific">Tetraselmis subcordiformis</name>
    <name type="common">Marine green alga</name>
    <name type="synonym">Carteria subcordiformis</name>
    <dbReference type="NCBI Taxonomy" id="3161"/>
    <lineage>
        <taxon>Eukaryota</taxon>
        <taxon>Viridiplantae</taxon>
        <taxon>Chlorophyta</taxon>
        <taxon>core chlorophytes</taxon>
        <taxon>Chlorodendrophyceae</taxon>
        <taxon>Chlorodendrales</taxon>
        <taxon>Chlorodendraceae</taxon>
        <taxon>Tetraselmis</taxon>
    </lineage>
</organism>
<feature type="chain" id="PRO_0000117808" description="NADH-ubiquinone oxidoreductase chain 3">
    <location>
        <begin position="1"/>
        <end position="117"/>
    </location>
</feature>
<feature type="transmembrane region" description="Helical" evidence="2">
    <location>
        <begin position="8"/>
        <end position="28"/>
    </location>
</feature>
<feature type="transmembrane region" description="Helical" evidence="2">
    <location>
        <begin position="61"/>
        <end position="81"/>
    </location>
</feature>
<feature type="transmembrane region" description="Helical" evidence="2">
    <location>
        <begin position="86"/>
        <end position="106"/>
    </location>
</feature>
<evidence type="ECO:0000250" key="1"/>
<evidence type="ECO:0000255" key="2"/>
<evidence type="ECO:0000305" key="3"/>